<accession>Q1QU06</accession>
<sequence>MKRVHVIDSHTAGEPTRLVMEGMPALSGRTIAEKCDDFRDNHDAWRRAIMLEPRGHDVLVGALYCAPESSDASCGVIFFNNSGYLGMCGHGTIGLVASLHHLGQLTPGCHKIDTPAGPVSATLHDDGAVTVRNVLSYRHRRRVPVEVPGYGTVHGDIAWGGNWFFLVSDHDMTLELDNVEALTDYTWAIRQALEAQSITGENGGVIDHIELFCDDREADSRNFVLCPGKAYDRSPCGTGTSAKLACLAADGKLAPGQVWTQASICGSRFEAFYEREGDGIRPSIKGRAYLSADATLLIDERDPFAWGIASP</sequence>
<gene>
    <name evidence="5" type="ordered locus">Csal_2705</name>
</gene>
<evidence type="ECO:0000250" key="1">
    <source>
        <dbReference type="UniProtKB" id="Q4KGU2"/>
    </source>
</evidence>
<evidence type="ECO:0000269" key="2">
    <source>
    </source>
</evidence>
<evidence type="ECO:0000303" key="3">
    <source>
    </source>
</evidence>
<evidence type="ECO:0000305" key="4"/>
<evidence type="ECO:0000312" key="5">
    <source>
        <dbReference type="EMBL" id="ABE60052.1"/>
    </source>
</evidence>
<evidence type="ECO:0007829" key="6">
    <source>
        <dbReference type="PDB" id="4JCI"/>
    </source>
</evidence>
<name>4HYPE_CHRSD</name>
<protein>
    <recommendedName>
        <fullName evidence="3">4-hydroxyproline 2-epimerase</fullName>
        <shortName>4Hyp 2-epimerase</shortName>
        <shortName evidence="3">4HypE</shortName>
        <ecNumber evidence="2">5.1.1.8</ecNumber>
    </recommendedName>
</protein>
<feature type="chain" id="PRO_0000432245" description="4-hydroxyproline 2-epimerase">
    <location>
        <begin position="1"/>
        <end position="311"/>
    </location>
</feature>
<feature type="active site" description="Proton acceptor" evidence="1">
    <location>
        <position position="88"/>
    </location>
</feature>
<feature type="active site" description="Proton donor" evidence="1">
    <location>
        <position position="236"/>
    </location>
</feature>
<feature type="binding site" evidence="1">
    <location>
        <begin position="89"/>
        <end position="90"/>
    </location>
    <ligand>
        <name>substrate</name>
    </ligand>
</feature>
<feature type="binding site" evidence="1">
    <location>
        <position position="208"/>
    </location>
    <ligand>
        <name>substrate</name>
    </ligand>
</feature>
<feature type="binding site" evidence="1">
    <location>
        <position position="232"/>
    </location>
    <ligand>
        <name>substrate</name>
    </ligand>
</feature>
<feature type="binding site" evidence="1">
    <location>
        <begin position="237"/>
        <end position="238"/>
    </location>
    <ligand>
        <name>substrate</name>
    </ligand>
</feature>
<feature type="strand" evidence="6">
    <location>
        <begin position="1"/>
        <end position="11"/>
    </location>
</feature>
<feature type="strand" evidence="6">
    <location>
        <begin position="14"/>
        <end position="23"/>
    </location>
</feature>
<feature type="helix" evidence="6">
    <location>
        <begin position="31"/>
        <end position="41"/>
    </location>
</feature>
<feature type="helix" evidence="6">
    <location>
        <begin position="43"/>
        <end position="50"/>
    </location>
</feature>
<feature type="turn" evidence="6">
    <location>
        <begin position="52"/>
        <end position="54"/>
    </location>
</feature>
<feature type="strand" evidence="6">
    <location>
        <begin position="60"/>
        <end position="65"/>
    </location>
</feature>
<feature type="strand" evidence="6">
    <location>
        <begin position="73"/>
        <end position="79"/>
    </location>
</feature>
<feature type="helix" evidence="6">
    <location>
        <begin position="89"/>
        <end position="101"/>
    </location>
</feature>
<feature type="strand" evidence="6">
    <location>
        <begin position="107"/>
        <end position="113"/>
    </location>
</feature>
<feature type="strand" evidence="6">
    <location>
        <begin position="119"/>
        <end position="123"/>
    </location>
</feature>
<feature type="strand" evidence="6">
    <location>
        <begin position="129"/>
        <end position="132"/>
    </location>
</feature>
<feature type="strand" evidence="6">
    <location>
        <begin position="136"/>
        <end position="147"/>
    </location>
</feature>
<feature type="turn" evidence="6">
    <location>
        <begin position="148"/>
        <end position="150"/>
    </location>
</feature>
<feature type="strand" evidence="6">
    <location>
        <begin position="151"/>
        <end position="168"/>
    </location>
</feature>
<feature type="helix" evidence="6">
    <location>
        <begin position="176"/>
        <end position="178"/>
    </location>
</feature>
<feature type="helix" evidence="6">
    <location>
        <begin position="179"/>
        <end position="195"/>
    </location>
</feature>
<feature type="helix" evidence="6">
    <location>
        <begin position="201"/>
        <end position="203"/>
    </location>
</feature>
<feature type="strand" evidence="6">
    <location>
        <begin position="208"/>
        <end position="213"/>
    </location>
</feature>
<feature type="strand" evidence="6">
    <location>
        <begin position="218"/>
        <end position="226"/>
    </location>
</feature>
<feature type="turn" evidence="6">
    <location>
        <begin position="227"/>
        <end position="229"/>
    </location>
</feature>
<feature type="helix" evidence="6">
    <location>
        <begin position="237"/>
        <end position="249"/>
    </location>
</feature>
<feature type="strand" evidence="6">
    <location>
        <begin position="259"/>
        <end position="262"/>
    </location>
</feature>
<feature type="strand" evidence="6">
    <location>
        <begin position="268"/>
        <end position="276"/>
    </location>
</feature>
<feature type="strand" evidence="6">
    <location>
        <begin position="279"/>
        <end position="286"/>
    </location>
</feature>
<feature type="strand" evidence="6">
    <location>
        <begin position="288"/>
        <end position="298"/>
    </location>
</feature>
<feature type="turn" evidence="6">
    <location>
        <begin position="303"/>
        <end position="306"/>
    </location>
</feature>
<dbReference type="EC" id="5.1.1.8" evidence="2"/>
<dbReference type="EMBL" id="CP000285">
    <property type="protein sequence ID" value="ABE60052.1"/>
    <property type="molecule type" value="Genomic_DNA"/>
</dbReference>
<dbReference type="RefSeq" id="WP_011507998.1">
    <property type="nucleotide sequence ID" value="NC_007963.1"/>
</dbReference>
<dbReference type="PDB" id="4JCI">
    <property type="method" value="X-ray"/>
    <property type="resolution" value="1.70 A"/>
    <property type="chains" value="A/B=1-311"/>
</dbReference>
<dbReference type="PDBsum" id="4JCI"/>
<dbReference type="SMR" id="Q1QU06"/>
<dbReference type="STRING" id="290398.Csal_2705"/>
<dbReference type="GeneID" id="95335402"/>
<dbReference type="KEGG" id="csa:Csal_2705"/>
<dbReference type="eggNOG" id="COG3938">
    <property type="taxonomic scope" value="Bacteria"/>
</dbReference>
<dbReference type="HOGENOM" id="CLU_036729_1_0_6"/>
<dbReference type="OrthoDB" id="181267at2"/>
<dbReference type="EvolutionaryTrace" id="Q1QU06"/>
<dbReference type="Proteomes" id="UP000000239">
    <property type="component" value="Chromosome"/>
</dbReference>
<dbReference type="GO" id="GO:0047580">
    <property type="term" value="F:4-hydroxyproline epimerase activity"/>
    <property type="evidence" value="ECO:0007669"/>
    <property type="project" value="UniProtKB-EC"/>
</dbReference>
<dbReference type="FunFam" id="3.10.310.10:FF:000012">
    <property type="entry name" value="4-hydroxyproline 2-epimerase"/>
    <property type="match status" value="1"/>
</dbReference>
<dbReference type="Gene3D" id="3.10.310.10">
    <property type="entry name" value="Diaminopimelate Epimerase, Chain A, domain 1"/>
    <property type="match status" value="2"/>
</dbReference>
<dbReference type="InterPro" id="IPR008794">
    <property type="entry name" value="Pro_racemase_fam"/>
</dbReference>
<dbReference type="NCBIfam" id="NF010577">
    <property type="entry name" value="PRK13970.1"/>
    <property type="match status" value="1"/>
</dbReference>
<dbReference type="PANTHER" id="PTHR33442">
    <property type="entry name" value="TRANS-3-HYDROXY-L-PROLINE DEHYDRATASE"/>
    <property type="match status" value="1"/>
</dbReference>
<dbReference type="PANTHER" id="PTHR33442:SF1">
    <property type="entry name" value="TRANS-3-HYDROXY-L-PROLINE DEHYDRATASE"/>
    <property type="match status" value="1"/>
</dbReference>
<dbReference type="Pfam" id="PF05544">
    <property type="entry name" value="Pro_racemase"/>
    <property type="match status" value="1"/>
</dbReference>
<dbReference type="PIRSF" id="PIRSF029792">
    <property type="entry name" value="Pro_racemase"/>
    <property type="match status" value="1"/>
</dbReference>
<dbReference type="SFLD" id="SFLDS00028">
    <property type="entry name" value="Proline_Racemase"/>
    <property type="match status" value="1"/>
</dbReference>
<dbReference type="SUPFAM" id="SSF54506">
    <property type="entry name" value="Diaminopimelate epimerase-like"/>
    <property type="match status" value="1"/>
</dbReference>
<comment type="function">
    <text evidence="2">Catalyzes the epimerization of trans-4-hydroxy-L-proline (t4LHyp) to cis-4-hydroxy-D-proline (c4DHyp). Is likely involved in a degradation pathway that converts t4LHyp to alpha-ketoglutarate. Displays no proline racemase activity.</text>
</comment>
<comment type="catalytic activity">
    <reaction evidence="2">
        <text>trans-4-hydroxy-L-proline = cis-4-hydroxy-D-proline</text>
        <dbReference type="Rhea" id="RHEA:21152"/>
        <dbReference type="ChEBI" id="CHEBI:57690"/>
        <dbReference type="ChEBI" id="CHEBI:58375"/>
        <dbReference type="EC" id="5.1.1.8"/>
    </reaction>
</comment>
<comment type="similarity">
    <text evidence="4">Belongs to the proline racemase family.</text>
</comment>
<keyword id="KW-0002">3D-structure</keyword>
<keyword id="KW-0413">Isomerase</keyword>
<keyword id="KW-1185">Reference proteome</keyword>
<organism>
    <name type="scientific">Chromohalobacter salexigens (strain ATCC BAA-138 / DSM 3043 / CIP 106854 / NCIMB 13768 / 1H11)</name>
    <dbReference type="NCBI Taxonomy" id="290398"/>
    <lineage>
        <taxon>Bacteria</taxon>
        <taxon>Pseudomonadati</taxon>
        <taxon>Pseudomonadota</taxon>
        <taxon>Gammaproteobacteria</taxon>
        <taxon>Oceanospirillales</taxon>
        <taxon>Halomonadaceae</taxon>
        <taxon>Chromohalobacter</taxon>
    </lineage>
</organism>
<proteinExistence type="evidence at protein level"/>
<reference key="1">
    <citation type="journal article" date="2011" name="Stand. Genomic Sci.">
        <title>Complete genome sequence of the halophilic and highly halotolerant Chromohalobacter salexigens type strain (1H11(T)).</title>
        <authorList>
            <person name="Copeland A."/>
            <person name="O'Connor K."/>
            <person name="Lucas S."/>
            <person name="Lapidus A."/>
            <person name="Berry K.W."/>
            <person name="Detter J.C."/>
            <person name="Del Rio T.G."/>
            <person name="Hammon N."/>
            <person name="Dalin E."/>
            <person name="Tice H."/>
            <person name="Pitluck S."/>
            <person name="Bruce D."/>
            <person name="Goodwin L."/>
            <person name="Han C."/>
            <person name="Tapia R."/>
            <person name="Saunders E."/>
            <person name="Schmutz J."/>
            <person name="Brettin T."/>
            <person name="Larimer F."/>
            <person name="Land M."/>
            <person name="Hauser L."/>
            <person name="Vargas C."/>
            <person name="Nieto J.J."/>
            <person name="Kyrpides N.C."/>
            <person name="Ivanova N."/>
            <person name="Goker M."/>
            <person name="Klenk H.P."/>
            <person name="Csonka L.N."/>
            <person name="Woyke T."/>
        </authorList>
    </citation>
    <scope>NUCLEOTIDE SEQUENCE [LARGE SCALE GENOMIC DNA]</scope>
    <source>
        <strain>ATCC BAA-138 / DSM 3043 / CIP 106854 / NCIMB 13768 / 1H11</strain>
    </source>
</reference>
<reference key="2">
    <citation type="journal article" date="2014" name="Elife">
        <title>Prediction and characterization of enzymatic activities guided by sequence similarity and genome neighborhood networks.</title>
        <authorList>
            <person name="Zhao S."/>
            <person name="Sakai A."/>
            <person name="Zhang X."/>
            <person name="Vetting M.W."/>
            <person name="Kumar R."/>
            <person name="Hillerich B."/>
            <person name="San Francisco B."/>
            <person name="Solbiati J."/>
            <person name="Steves A."/>
            <person name="Brown S."/>
            <person name="Akiva E."/>
            <person name="Barber A."/>
            <person name="Seidel R.D."/>
            <person name="Babbitt P.C."/>
            <person name="Almo S.C."/>
            <person name="Gerlt J.A."/>
            <person name="Jacobson M.P."/>
        </authorList>
    </citation>
    <scope>X-RAY CRYSTALLOGRAPHY (1.70 ANGSTROMS)</scope>
    <scope>FUNCTION</scope>
    <scope>CATALYTIC ACTIVITY</scope>
    <source>
        <strain>ATCC BAA-138 / DSM 3043 / CIP 106854 / NCIMB 13768 / 1H11</strain>
    </source>
</reference>